<comment type="function">
    <text evidence="3 8 9">Part of a stress-induced multi-chaperone system, it is involved in the recovery of the cell from heat-induced damage, in cooperation with DnaK, DnaJ and GrpE. Acts before DnaK, in the processing of protein aggregates. Protein binding stimulates the ATPase activity; ATP hydrolysis unfolds the denatured protein aggregates, which probably helps expose new hydrophobic binding sites on the surface of ClpB-bound aggregates, contributing to the solubilization and refolding of denatured protein aggregates by DnaK.</text>
</comment>
<comment type="subunit">
    <text evidence="4">Homohexamer. The oligomerization is ATP-dependent.</text>
</comment>
<comment type="interaction">
    <interactant intactId="EBI-546182">
        <id>P63284</id>
    </interactant>
    <interactant intactId="EBI-546182">
        <id>P63284</id>
        <label>clpB</label>
    </interactant>
    <organismsDiffer>false</organismsDiffer>
    <experiments>4</experiments>
</comment>
<comment type="interaction">
    <interactant intactId="EBI-546182">
        <id>P63284</id>
    </interactant>
    <interactant intactId="EBI-542092">
        <id>P0A6Y8</id>
        <label>dnaK</label>
    </interactant>
    <organismsDiffer>false</organismsDiffer>
    <experiments>8</experiments>
</comment>
<comment type="interaction">
    <interactant intactId="EBI-546182">
        <id>P63284</id>
    </interactant>
    <interactant intactId="EBI-9130839">
        <id>P33014</id>
        <label>tsuB</label>
    </interactant>
    <organismsDiffer>false</organismsDiffer>
    <experiments>3</experiments>
</comment>
<comment type="subcellular location">
    <subcellularLocation>
        <location evidence="12">Cytoplasm</location>
    </subcellularLocation>
</comment>
<comment type="alternative products">
    <event type="alternative initiation"/>
    <isoform>
        <id>P63284-1</id>
        <name>ClpB</name>
        <sequence type="displayed"/>
    </isoform>
    <isoform>
        <id>P63284-2</id>
        <name>ClpB-3</name>
        <sequence type="described" ref="VSP_018703 VSP_018987"/>
    </isoform>
</comment>
<comment type="induction">
    <text>By heat shock and other environmental stresses.</text>
</comment>
<comment type="domain">
    <text>The Clp repeat (R) domain probably functions as a substrate-discriminating domain, recruiting aggregated proteins to the ClpB hexamer and/or stabilizing bound proteins. The NBD2 domain is responsible for oligomerization, whereas the NBD1 domain stabilizes the hexamer probably in an ATP-dependent manner. The movement of the coiled-coil domain is essential for ClpB ability to rescue proteins from an aggregated state, probably by pulling apart large aggregated proteins, which are bound between the coiled-coils motifs of adjacent ClpB subunits in the functional hexamer.</text>
</comment>
<comment type="miscellaneous">
    <text>One peptide binds per ClpB hexamer; the binding site is formed only upon ATP-driven oligomerization.</text>
</comment>
<comment type="miscellaneous">
    <molecule>Isoform ClpB-3</molecule>
    <text evidence="13">ClpB-3 ATPase activity is not activated by proteins, as it is in ClpB.</text>
</comment>
<comment type="similarity">
    <text evidence="13">Belongs to the ClpA/ClpB family.</text>
</comment>
<name>CLPB_ECOLI</name>
<evidence type="ECO:0000250" key="1"/>
<evidence type="ECO:0000255" key="2">
    <source>
        <dbReference type="PROSITE-ProRule" id="PRU01251"/>
    </source>
</evidence>
<evidence type="ECO:0000269" key="3">
    <source>
    </source>
</evidence>
<evidence type="ECO:0000269" key="4">
    <source>
    </source>
</evidence>
<evidence type="ECO:0000269" key="5">
    <source>
    </source>
</evidence>
<evidence type="ECO:0000269" key="6">
    <source>
    </source>
</evidence>
<evidence type="ECO:0000269" key="7">
    <source>
    </source>
</evidence>
<evidence type="ECO:0000269" key="8">
    <source>
    </source>
</evidence>
<evidence type="ECO:0000269" key="9">
    <source>
    </source>
</evidence>
<evidence type="ECO:0000269" key="10">
    <source>
    </source>
</evidence>
<evidence type="ECO:0000269" key="11">
    <source>
    </source>
</evidence>
<evidence type="ECO:0000269" key="12">
    <source>
    </source>
</evidence>
<evidence type="ECO:0000305" key="13"/>
<evidence type="ECO:0000312" key="14">
    <source>
        <dbReference type="EMBL" id="AAC75641.1"/>
    </source>
</evidence>
<evidence type="ECO:0007829" key="15">
    <source>
        <dbReference type="PDB" id="1JBK"/>
    </source>
</evidence>
<evidence type="ECO:0007829" key="16">
    <source>
        <dbReference type="PDB" id="1KHY"/>
    </source>
</evidence>
<evidence type="ECO:0007829" key="17">
    <source>
        <dbReference type="PDB" id="4CIU"/>
    </source>
</evidence>
<evidence type="ECO:0007829" key="18">
    <source>
        <dbReference type="PDB" id="6OAX"/>
    </source>
</evidence>
<evidence type="ECO:0007829" key="19">
    <source>
        <dbReference type="PDB" id="6OAY"/>
    </source>
</evidence>
<evidence type="ECO:0007829" key="20">
    <source>
        <dbReference type="PDB" id="6OG1"/>
    </source>
</evidence>
<accession>P63284</accession>
<accession>A0A7H2C767</accession>
<accession>P03815</accession>
<protein>
    <recommendedName>
        <fullName>Chaperone protein ClpB</fullName>
    </recommendedName>
    <alternativeName>
        <fullName evidence="13">ClpB disaggregase</fullName>
    </alternativeName>
    <alternativeName>
        <fullName>Heat shock protein F84.1</fullName>
    </alternativeName>
</protein>
<reference key="1">
    <citation type="journal article" date="1990" name="Proc. Natl. Acad. Sci. U.S.A.">
        <title>Conservation of the regulatory subunit for the Clp ATP-dependent protease in prokaryotes and eukaryotes.</title>
        <authorList>
            <person name="Gottesman S."/>
            <person name="Squires C."/>
            <person name="Pichersky E."/>
            <person name="Carrington M."/>
            <person name="Hobbs M."/>
            <person name="Mattick J.S."/>
            <person name="Dalrymple B."/>
            <person name="Kuramitsu H."/>
            <person name="Shiroza T."/>
            <person name="Foster T."/>
            <person name="Clark W.P."/>
            <person name="Ross B."/>
            <person name="Squires C.L."/>
            <person name="Maurizi M.R."/>
        </authorList>
    </citation>
    <scope>NUCLEOTIDE SEQUENCE [GENOMIC DNA]</scope>
</reference>
<reference key="2">
    <citation type="journal article" date="1997" name="DNA Res.">
        <title>Construction of a contiguous 874-kb sequence of the Escherichia coli-K12 genome corresponding to 50.0-68.8 min on the linkage map and analysis of its sequence features.</title>
        <authorList>
            <person name="Yamamoto Y."/>
            <person name="Aiba H."/>
            <person name="Baba T."/>
            <person name="Hayashi K."/>
            <person name="Inada T."/>
            <person name="Isono K."/>
            <person name="Itoh T."/>
            <person name="Kimura S."/>
            <person name="Kitagawa M."/>
            <person name="Makino K."/>
            <person name="Miki T."/>
            <person name="Mitsuhashi N."/>
            <person name="Mizobuchi K."/>
            <person name="Mori H."/>
            <person name="Nakade S."/>
            <person name="Nakamura Y."/>
            <person name="Nashimoto H."/>
            <person name="Oshima T."/>
            <person name="Oyama S."/>
            <person name="Saito N."/>
            <person name="Sampei G."/>
            <person name="Satoh Y."/>
            <person name="Sivasundaram S."/>
            <person name="Tagami H."/>
            <person name="Takahashi H."/>
            <person name="Takeda J."/>
            <person name="Takemoto K."/>
            <person name="Uehara K."/>
            <person name="Wada C."/>
            <person name="Yamagata S."/>
            <person name="Horiuchi T."/>
        </authorList>
    </citation>
    <scope>NUCLEOTIDE SEQUENCE [LARGE SCALE GENOMIC DNA]</scope>
    <source>
        <strain>K12 / W3110 / ATCC 27325 / DSM 5911</strain>
    </source>
</reference>
<reference key="3">
    <citation type="journal article" date="1997" name="Science">
        <title>The complete genome sequence of Escherichia coli K-12.</title>
        <authorList>
            <person name="Blattner F.R."/>
            <person name="Plunkett G. III"/>
            <person name="Bloch C.A."/>
            <person name="Perna N.T."/>
            <person name="Burland V."/>
            <person name="Riley M."/>
            <person name="Collado-Vides J."/>
            <person name="Glasner J.D."/>
            <person name="Rode C.K."/>
            <person name="Mayhew G.F."/>
            <person name="Gregor J."/>
            <person name="Davis N.W."/>
            <person name="Kirkpatrick H.A."/>
            <person name="Goeden M.A."/>
            <person name="Rose D.J."/>
            <person name="Mau B."/>
            <person name="Shao Y."/>
        </authorList>
    </citation>
    <scope>NUCLEOTIDE SEQUENCE [LARGE SCALE GENOMIC DNA]</scope>
    <source>
        <strain>K12 / MG1655 / ATCC 47076</strain>
    </source>
</reference>
<reference key="4">
    <citation type="journal article" date="2006" name="Mol. Syst. Biol.">
        <title>Highly accurate genome sequences of Escherichia coli K-12 strains MG1655 and W3110.</title>
        <authorList>
            <person name="Hayashi K."/>
            <person name="Morooka N."/>
            <person name="Yamamoto Y."/>
            <person name="Fujita K."/>
            <person name="Isono K."/>
            <person name="Choi S."/>
            <person name="Ohtsubo E."/>
            <person name="Baba T."/>
            <person name="Wanner B.L."/>
            <person name="Mori H."/>
            <person name="Horiuchi T."/>
        </authorList>
    </citation>
    <scope>NUCLEOTIDE SEQUENCE [LARGE SCALE GENOMIC DNA]</scope>
    <source>
        <strain>K12 / W3110 / ATCC 27325 / DSM 5911</strain>
    </source>
</reference>
<reference key="5">
    <citation type="journal article" date="1991" name="J. Bacteriol.">
        <title>Expression of ClpB, an analog of the ATP-dependent protease regulatory subunit in Escherichia coli, is controlled by a heat shock sigma factor (sigma 32).</title>
        <authorList>
            <person name="Kitagawa M."/>
            <person name="Wada C."/>
            <person name="Yoshioka S."/>
            <person name="Yura T."/>
        </authorList>
    </citation>
    <scope>NUCLEOTIDE SEQUENCE [GENOMIC DNA] OF 1-593</scope>
    <source>
        <strain>K12</strain>
    </source>
</reference>
<reference key="6">
    <citation type="journal article" date="1982" name="Nucleic Acids Res.">
        <title>Nucleotide sequence of the rrnG ribosomal RNA promoter region of Escherichia coli.</title>
        <authorList>
            <person name="Shen W.-F."/>
            <person name="Squires C."/>
            <person name="Squires C.L."/>
        </authorList>
    </citation>
    <scope>NUCLEOTIDE SEQUENCE [GENOMIC DNA] OF 753-857</scope>
</reference>
<reference key="7">
    <citation type="submission" date="1996-02" db="EMBL/GenBank/DDBJ databases">
        <authorList>
            <person name="Ogura T."/>
            <person name="Tomoyasu T."/>
        </authorList>
    </citation>
    <scope>NUCLEOTIDE SEQUENCE [GENOMIC DNA] OF 1-31</scope>
    <source>
        <strain>K12 / W3110 / ATCC 27325 / DSM 5911</strain>
    </source>
</reference>
<reference key="8">
    <citation type="journal article" date="1991" name="Biochem. Biophys. Res. Commun.">
        <title>ClpB proteins copurify with the anaerobic Escherichia coli reductase.</title>
        <authorList>
            <person name="Pontis E."/>
            <person name="Sun X.Y."/>
            <person name="Joernvall H."/>
            <person name="Krook M."/>
            <person name="Reichard P."/>
        </authorList>
    </citation>
    <scope>PROTEIN SEQUENCE OF 1-14; 150-157; 355-364 AND 452-460</scope>
</reference>
<reference key="9">
    <citation type="journal article" date="1991" name="J. Bacteriol.">
        <title>ClpB is the Escherichia coli heat shock protein F84.1.</title>
        <authorList>
            <person name="Squires C.L."/>
            <person name="Pedersen S."/>
            <person name="Ross B.M."/>
            <person name="Squires C."/>
        </authorList>
    </citation>
    <scope>IDENTIFICATION AS A HEAT SHOCK PROTEIN</scope>
</reference>
<reference key="10">
    <citation type="journal article" date="1993" name="J. Biol. Chem.">
        <title>Site-directed mutagenesis of the dual translational initiation sites of the clpB gene of Escherichia coli and characterization of its gene products.</title>
        <authorList>
            <person name="Park S.K."/>
            <person name="Kim K.I."/>
            <person name="Woo K.M."/>
            <person name="Seol J.H."/>
            <person name="Tanaka K."/>
            <person name="Ichihara A."/>
            <person name="Ha D.B."/>
            <person name="Chung C.H."/>
        </authorList>
    </citation>
    <scope>ALTERNATIVE INITIATION</scope>
    <scope>ATPASE ACTIVITY</scope>
    <scope>SUBCELLULAR LOCATION</scope>
</reference>
<reference key="11">
    <citation type="journal article" date="1997" name="Electrophoresis">
        <title>Escherichia coli proteome analysis using the gene-protein database.</title>
        <authorList>
            <person name="VanBogelen R.A."/>
            <person name="Abshire K.Z."/>
            <person name="Moldover B."/>
            <person name="Olson E.R."/>
            <person name="Neidhardt F.C."/>
        </authorList>
    </citation>
    <scope>IDENTIFICATION BY 2D-GEL</scope>
</reference>
<reference key="12">
    <citation type="journal article" date="2000" name="J. Mol. Biol.">
        <title>Heptameric ring structure of the heat-shock protein ClpB, a protein-activated ATPase in Escherichia coli.</title>
        <authorList>
            <person name="Kim K.I."/>
            <person name="Cheong G.-W."/>
            <person name="Park S.-C."/>
            <person name="Ha J.-S."/>
            <person name="Woo K.M."/>
            <person name="Choi S.J."/>
            <person name="Chung C.H."/>
        </authorList>
    </citation>
    <scope>SUBUNIT</scope>
    <scope>MUTAGENESIS OF LYS-212 AND LYS-611</scope>
</reference>
<reference key="13">
    <citation type="journal article" date="2000" name="J. Biol. Chem.">
        <title>Structure and activity of ClpB from Escherichia coli. Role of the amino- and -carboxyl-terminal domains.</title>
        <authorList>
            <person name="Barnett M.E."/>
            <person name="Zolkiewska A."/>
            <person name="Zolkiewski M."/>
        </authorList>
    </citation>
    <scope>FUNCTION OF DOMAINS</scope>
</reference>
<reference key="14">
    <citation type="journal article" date="2003" name="J. Biol. Chem.">
        <title>Roles of individual domains and conserved motifs of the AAA+ chaperone ClpB in oligomerization, ATP hydrolysis, and chaperone activity.</title>
        <authorList>
            <person name="Mogk A."/>
            <person name="Schlieker C."/>
            <person name="Strub C."/>
            <person name="Rist W."/>
            <person name="Weibezahn J."/>
            <person name="Bukau B."/>
        </authorList>
    </citation>
    <scope>FUNCTION OF DOMAINS</scope>
    <scope>MUTAGENESIS OF LYS-212; GLU-279; ARG-332; TRP-543; LYS-611; GLU-678; ARG-756 AND 813-GLY--ARG-815</scope>
    <source>
        <strain>K12 / MC4100 / ATCC 35695 / DSM 6574</strain>
    </source>
</reference>
<reference key="15">
    <citation type="journal article" date="2003" name="J. Biol. Chem.">
        <title>Characterization of a trap mutant of the AAA+ chaperone ClpB.</title>
        <authorList>
            <person name="Weibezahn J."/>
            <person name="Schlieker C."/>
            <person name="Bukau B."/>
            <person name="Mogk A."/>
        </authorList>
    </citation>
    <scope>BINDING TO PROTEIN AGGREGATES</scope>
    <scope>INTERACTION WITH DNAK</scope>
    <source>
        <strain>K12 / MC4100 / ATCC 35695 / DSM 6574</strain>
    </source>
</reference>
<reference key="16">
    <citation type="journal article" date="2003" name="Biochemistry">
        <title>Structure and function of the middle domain of ClpB from Escherichia coli.</title>
        <authorList>
            <person name="Kedzierska S."/>
            <person name="Akoev V."/>
            <person name="Barnett M.E."/>
            <person name="Zolkiewski M."/>
        </authorList>
    </citation>
    <scope>FUNCTION OF MIDDLE DOMAIN</scope>
</reference>
<reference key="17">
    <citation type="journal article" date="2004" name="Protein Sci.">
        <title>Nucleotide-induced switch in oligomerization of the AAA+ ATPase ClpB.</title>
        <authorList>
            <person name="Akoev V."/>
            <person name="Gogol E.P."/>
            <person name="Barnett M.E."/>
            <person name="Zolkiewski M."/>
        </authorList>
    </citation>
    <scope>OLIGOMERIZATION</scope>
    <scope>NUCLEOTIDE-BINDING</scope>
    <source>
        <strain>K12 / MC1000 / ATCC 39531</strain>
    </source>
</reference>
<reference key="18">
    <citation type="journal article" date="2004" name="Nat. Struct. Mol. Biol.">
        <title>Substrate recognition by the AAA+ chaperone ClpB.</title>
        <authorList>
            <person name="Schlieker C."/>
            <person name="Weibezahn J."/>
            <person name="Patzelt H."/>
            <person name="Tessarz P."/>
            <person name="Strub C."/>
            <person name="Zeth K."/>
            <person name="Erbse A."/>
            <person name="Schneider-Mergener J."/>
            <person name="Chin J.W."/>
            <person name="Schultz P.G."/>
            <person name="Bukau B."/>
            <person name="Mogk A."/>
        </authorList>
    </citation>
    <scope>SUBSTRATE-BINDING</scope>
    <scope>MUTAGENESIS OF TYR-251; GLU-254 AND GLU-257</scope>
    <source>
        <strain>K12 / MC4100 / ATCC 35695 / DSM 6574</strain>
    </source>
</reference>
<reference key="19">
    <citation type="journal article" date="2002" name="J. Mol. Biol.">
        <title>Conserved amino acid residues within the amino-terminal domain of ClpB are essential for the chaperone activity.</title>
        <authorList>
            <person name="Liu Z."/>
            <person name="Tek V."/>
            <person name="Akoev V."/>
            <person name="Zolkiewski M."/>
        </authorList>
    </citation>
    <scope>MUTAGENESIS OF THR-7; SER-84; ASP-103 AND GLU-109</scope>
</reference>
<reference key="20">
    <citation type="journal article" date="2002" name="Biochemistry">
        <title>Site-directed mutagenesis of conserved charged amino acid residues in ClpB from Escherichia coli.</title>
        <authorList>
            <person name="Barnett M.E."/>
            <person name="Zolkiewski M."/>
        </authorList>
    </citation>
    <scope>MUTAGENESIS OF LYS-212; LYS-611; ASP-797; ARG-815; ARG-819 AND GLU-826</scope>
</reference>
<reference key="21">
    <citation type="journal article" date="2001" name="Acta Crystallogr. D">
        <title>Cloning, expression, purification and preliminary X-ray crystallographic studies of Escherichia coli Hsp100 ClpB N-terminal domain.</title>
        <authorList>
            <person name="Li J."/>
            <person name="Sha B."/>
        </authorList>
    </citation>
    <scope>CRYSTALLIZATION OF N-TERMINAL DOMAIN</scope>
</reference>
<reference key="22">
    <citation type="journal article" date="2002" name="Acta Crystallogr. D">
        <title>Cloning, expression, purification and preliminary X-ray crystallographic studies of Escherichia coli Hsp100 nucleotide-binding domain 2 (NBD2).</title>
        <authorList>
            <person name="Li J."/>
            <person name="Sha B."/>
        </authorList>
    </citation>
    <scope>CRYSTALLIZATION OF NBD2</scope>
</reference>
<reference key="23">
    <citation type="journal article" date="2009" name="Mol. Cell. Proteomics">
        <title>Lysine acetylation is a highly abundant and evolutionarily conserved modification in Escherichia coli.</title>
        <authorList>
            <person name="Zhang J."/>
            <person name="Sprung R."/>
            <person name="Pei J."/>
            <person name="Tan X."/>
            <person name="Kim S."/>
            <person name="Zhu H."/>
            <person name="Liu C.F."/>
            <person name="Grishin N.V."/>
            <person name="Zhao Y."/>
        </authorList>
    </citation>
    <scope>ACETYLATION [LARGE SCALE ANALYSIS] AT LYS-96; LYS-176 AND LYS-640</scope>
    <scope>IDENTIFICATION BY MASS SPECTROMETRY</scope>
    <source>
        <strain>K12 / JW1106</strain>
        <strain>K12 / MG1655 / ATCC 47076</strain>
    </source>
</reference>
<reference key="24">
    <citation type="journal article" date="2002" name="J. Mol. Biol.">
        <title>Crystal structure of E. coli Hsp100 ClpB nucleotide-binding domain 1 (NBD1) and mechanistic studies on ClpB ATPase activity.</title>
        <authorList>
            <person name="Li J."/>
            <person name="Sha B."/>
        </authorList>
    </citation>
    <scope>X-RAY CRYSTALLOGRAPHY (1.8 ANGSTROMS) OF 159-351</scope>
</reference>
<reference key="25">
    <citation type="journal article" date="2003" name="Structure">
        <title>Crystal structure of the E. coli Hsp100 ClpB N-terminal domain.</title>
        <authorList>
            <person name="Li J."/>
            <person name="Sha B."/>
        </authorList>
    </citation>
    <scope>X-RAY CRYSTALLOGRAPHY (1.95 ANGSTROMS) OF 4-142</scope>
    <scope>MUTAGENESIS OF LEU-93; LEU-97 AND LEU-110</scope>
</reference>
<organism>
    <name type="scientific">Escherichia coli (strain K12)</name>
    <dbReference type="NCBI Taxonomy" id="83333"/>
    <lineage>
        <taxon>Bacteria</taxon>
        <taxon>Pseudomonadati</taxon>
        <taxon>Pseudomonadota</taxon>
        <taxon>Gammaproteobacteria</taxon>
        <taxon>Enterobacterales</taxon>
        <taxon>Enterobacteriaceae</taxon>
        <taxon>Escherichia</taxon>
    </lineage>
</organism>
<feature type="chain" id="PRO_0000005491" description="Chaperone protein ClpB">
    <location>
        <begin position="1"/>
        <end position="857"/>
    </location>
</feature>
<feature type="domain" description="Clp R" evidence="2">
    <location>
        <begin position="3"/>
        <end position="146"/>
    </location>
</feature>
<feature type="region of interest" description="Repeat 1" evidence="2">
    <location>
        <begin position="6"/>
        <end position="71"/>
    </location>
</feature>
<feature type="region of interest" description="Repeat 2" evidence="2">
    <location>
        <begin position="83"/>
        <end position="146"/>
    </location>
</feature>
<feature type="region of interest" description="NBD1">
    <location>
        <begin position="159"/>
        <end position="340"/>
    </location>
</feature>
<feature type="region of interest" description="Linker">
    <location>
        <begin position="341"/>
        <end position="545"/>
    </location>
</feature>
<feature type="region of interest" description="NBD2">
    <location>
        <begin position="555"/>
        <end position="765"/>
    </location>
</feature>
<feature type="region of interest" description="C-terminal">
    <location>
        <begin position="766"/>
        <end position="857"/>
    </location>
</feature>
<feature type="coiled-coil region" evidence="1">
    <location>
        <begin position="391"/>
        <end position="525"/>
    </location>
</feature>
<feature type="binding site">
    <location>
        <begin position="206"/>
        <end position="213"/>
    </location>
    <ligand>
        <name>ATP</name>
        <dbReference type="ChEBI" id="CHEBI:30616"/>
        <label>1</label>
    </ligand>
</feature>
<feature type="binding site">
    <location>
        <begin position="605"/>
        <end position="612"/>
    </location>
    <ligand>
        <name>ATP</name>
        <dbReference type="ChEBI" id="CHEBI:30616"/>
        <label>2</label>
    </ligand>
</feature>
<feature type="modified residue" description="N6-acetyllysine" evidence="11">
    <location>
        <position position="96"/>
    </location>
</feature>
<feature type="modified residue" description="N6-acetyllysine" evidence="11">
    <location>
        <position position="176"/>
    </location>
</feature>
<feature type="modified residue" description="N6-acetyllysine" evidence="11">
    <location>
        <position position="640"/>
    </location>
</feature>
<feature type="splice variant" id="VSP_018703" description="In isoform ClpB-3." evidence="13">
    <location>
        <begin position="1"/>
        <end position="148"/>
    </location>
</feature>
<feature type="splice variant" id="VSP_018987" description="In isoform ClpB-3." evidence="13">
    <original>V</original>
    <variation>M</variation>
    <location>
        <position position="149"/>
    </location>
</feature>
<feature type="mutagenesis site" description="Loss of chaperone activity." evidence="5">
    <original>T</original>
    <variation>A</variation>
    <location>
        <position position="7"/>
    </location>
</feature>
<feature type="mutagenesis site" description="No effect." evidence="5">
    <original>S</original>
    <variation>A</variation>
    <location>
        <position position="84"/>
    </location>
</feature>
<feature type="mutagenesis site" description="Loss of chaperone activity. Retains ATPase activity." evidence="7">
    <original>L</original>
    <variation>Q</variation>
    <location>
        <position position="93"/>
    </location>
</feature>
<feature type="mutagenesis site" description="75% decrease in chaperone activity; retains ATPase activity." evidence="7">
    <original>L</original>
    <variation>Q</variation>
    <location>
        <position position="97"/>
    </location>
</feature>
<feature type="mutagenesis site" description="Loss of chaperone activity." evidence="5">
    <original>D</original>
    <variation>A</variation>
    <location>
        <position position="103"/>
    </location>
</feature>
<feature type="mutagenesis site" description="Loss of chaperone activity." evidence="5">
    <original>E</original>
    <variation>A</variation>
    <location>
        <position position="109"/>
    </location>
</feature>
<feature type="mutagenesis site" description="30% decrease in chaperone activity; retains ATPase activity." evidence="7">
    <original>L</original>
    <variation>Q</variation>
    <location>
        <position position="110"/>
    </location>
</feature>
<feature type="mutagenesis site" description="Loss of ability to form oligomers even in the presence of ATP. Loss of chaperone activity." evidence="4 6 8">
    <original>K</original>
    <variation>T</variation>
    <location>
        <position position="212"/>
    </location>
</feature>
<feature type="mutagenesis site" description="Decrease in ability to disaggregate proteins due to decreased substrate-binding activity. Retains hexameric quaternary structure and ATPase activity." evidence="10">
    <original>Y</original>
    <variation>A</variation>
    <location>
        <position position="251"/>
    </location>
</feature>
<feature type="mutagenesis site" description="Decrease in ability to disaggregate proteins due to decreased substrate-binding activity. Retains hexameric quaternary structure and ATPase activity; when associated with A-257." evidence="10">
    <original>E</original>
    <variation>A</variation>
    <location>
        <position position="254"/>
    </location>
</feature>
<feature type="mutagenesis site" description="Decrease in ability to disaggregate proteins due to decreased substrate-binding activity. Retains hexameric quaternary structure and ATPase activity; when associated with A-254." evidence="10">
    <original>E</original>
    <variation>A</variation>
    <location>
        <position position="257"/>
    </location>
</feature>
<feature type="mutagenesis site" description="No effect on oligomerization." evidence="8">
    <original>E</original>
    <variation>A</variation>
    <location>
        <position position="279"/>
    </location>
</feature>
<feature type="mutagenesis site" description="Loss of ability to form oligomers." evidence="8">
    <original>R</original>
    <variation>A</variation>
    <location>
        <position position="332"/>
    </location>
</feature>
<feature type="mutagenesis site" description="No effect on chaperone activity or ability to form oligomers." evidence="8">
    <original>W</original>
    <variation>F</variation>
    <location>
        <position position="543"/>
    </location>
</feature>
<feature type="mutagenesis site" description="No effect on ability to form oligomers. Loss of chaperone activity." evidence="4 6 8">
    <original>K</original>
    <variation>T</variation>
    <location>
        <position position="611"/>
    </location>
</feature>
<feature type="mutagenesis site" description="No effect on oligomerization." evidence="8">
    <original>E</original>
    <variation>A</variation>
    <location>
        <position position="678"/>
    </location>
</feature>
<feature type="mutagenesis site" description="No effect on oligomerization. Loss of ATPase activity." evidence="8">
    <original>R</original>
    <variation>A</variation>
    <location>
        <position position="756"/>
    </location>
</feature>
<feature type="mutagenesis site" description="No effect." evidence="6">
    <original>D</original>
    <variation>A</variation>
    <location>
        <position position="797"/>
    </location>
</feature>
<feature type="mutagenesis site" description="No effect on oligomerization." evidence="8">
    <original>GAR</original>
    <variation>AAA</variation>
    <location>
        <begin position="813"/>
        <end position="815"/>
    </location>
</feature>
<feature type="mutagenesis site" description="Loss of ability to form oligomers; loss of chaperone activity." evidence="6">
    <original>R</original>
    <variation>A</variation>
    <location>
        <position position="815"/>
    </location>
</feature>
<feature type="mutagenesis site" description="Loss of ability to form oligomers; loss of chaperone activity." evidence="6">
    <original>R</original>
    <variation>A</variation>
    <location>
        <position position="819"/>
    </location>
</feature>
<feature type="mutagenesis site" description="No effect." evidence="6">
    <original>E</original>
    <variation>A</variation>
    <location>
        <position position="826"/>
    </location>
</feature>
<feature type="sequence conflict" description="In Ref. 1; AAA24422." evidence="13" ref="1">
    <original>KL</original>
    <variation>NV</variation>
    <location>
        <begin position="96"/>
        <end position="97"/>
    </location>
</feature>
<feature type="sequence conflict" description="In Ref. 1; AAA24422." evidence="13" ref="1">
    <original>L</original>
    <variation>V</variation>
    <location>
        <position position="122"/>
    </location>
</feature>
<feature type="helix" evidence="16">
    <location>
        <begin position="8"/>
        <end position="23"/>
    </location>
</feature>
<feature type="strand" evidence="16">
    <location>
        <begin position="27"/>
        <end position="29"/>
    </location>
</feature>
<feature type="helix" evidence="16">
    <location>
        <begin position="31"/>
        <end position="39"/>
    </location>
</feature>
<feature type="helix" evidence="16">
    <location>
        <begin position="46"/>
        <end position="53"/>
    </location>
</feature>
<feature type="helix" evidence="16">
    <location>
        <begin position="57"/>
        <end position="68"/>
    </location>
</feature>
<feature type="helix" evidence="16">
    <location>
        <begin position="85"/>
        <end position="101"/>
    </location>
</feature>
<feature type="strand" evidence="16">
    <location>
        <begin position="104"/>
        <end position="106"/>
    </location>
</feature>
<feature type="helix" evidence="16">
    <location>
        <begin position="108"/>
        <end position="116"/>
    </location>
</feature>
<feature type="helix" evidence="16">
    <location>
        <begin position="120"/>
        <end position="128"/>
    </location>
</feature>
<feature type="helix" evidence="16">
    <location>
        <begin position="133"/>
        <end position="141"/>
    </location>
</feature>
<feature type="helix" evidence="15">
    <location>
        <begin position="159"/>
        <end position="164"/>
    </location>
</feature>
<feature type="strand" evidence="15">
    <location>
        <begin position="165"/>
        <end position="167"/>
    </location>
</feature>
<feature type="helix" evidence="15">
    <location>
        <begin position="168"/>
        <end position="173"/>
    </location>
</feature>
<feature type="helix" evidence="15">
    <location>
        <begin position="184"/>
        <end position="194"/>
    </location>
</feature>
<feature type="strand" evidence="15">
    <location>
        <begin position="196"/>
        <end position="199"/>
    </location>
</feature>
<feature type="strand" evidence="15">
    <location>
        <begin position="201"/>
        <end position="205"/>
    </location>
</feature>
<feature type="helix" evidence="15">
    <location>
        <begin position="212"/>
        <end position="225"/>
    </location>
</feature>
<feature type="helix" evidence="15">
    <location>
        <begin position="230"/>
        <end position="232"/>
    </location>
</feature>
<feature type="strand" evidence="15">
    <location>
        <begin position="236"/>
        <end position="240"/>
    </location>
</feature>
<feature type="helix" evidence="15">
    <location>
        <begin position="242"/>
        <end position="246"/>
    </location>
</feature>
<feature type="turn" evidence="15">
    <location>
        <begin position="247"/>
        <end position="249"/>
    </location>
</feature>
<feature type="helix" evidence="15">
    <location>
        <begin position="252"/>
        <end position="268"/>
    </location>
</feature>
<feature type="turn" evidence="15">
    <location>
        <begin position="270"/>
        <end position="272"/>
    </location>
</feature>
<feature type="strand" evidence="15">
    <location>
        <begin position="273"/>
        <end position="278"/>
    </location>
</feature>
<feature type="helix" evidence="15">
    <location>
        <begin position="280"/>
        <end position="283"/>
    </location>
</feature>
<feature type="strand" evidence="18">
    <location>
        <begin position="289"/>
        <end position="292"/>
    </location>
</feature>
<feature type="helix" evidence="15">
    <location>
        <begin position="296"/>
        <end position="304"/>
    </location>
</feature>
<feature type="strand" evidence="19">
    <location>
        <begin position="307"/>
        <end position="309"/>
    </location>
</feature>
<feature type="strand" evidence="15">
    <location>
        <begin position="310"/>
        <end position="314"/>
    </location>
</feature>
<feature type="helix" evidence="15">
    <location>
        <begin position="316"/>
        <end position="322"/>
    </location>
</feature>
<feature type="turn" evidence="15">
    <location>
        <begin position="323"/>
        <end position="325"/>
    </location>
</feature>
<feature type="helix" evidence="15">
    <location>
        <begin position="327"/>
        <end position="330"/>
    </location>
</feature>
<feature type="strand" evidence="15">
    <location>
        <begin position="333"/>
        <end position="337"/>
    </location>
</feature>
<feature type="helix" evidence="15">
    <location>
        <begin position="343"/>
        <end position="347"/>
    </location>
</feature>
<feature type="helix" evidence="20">
    <location>
        <begin position="349"/>
        <end position="352"/>
    </location>
</feature>
<feature type="helix" evidence="18">
    <location>
        <begin position="354"/>
        <end position="361"/>
    </location>
</feature>
<feature type="strand" evidence="17">
    <location>
        <begin position="363"/>
        <end position="365"/>
    </location>
</feature>
<feature type="helix" evidence="18">
    <location>
        <begin position="367"/>
        <end position="380"/>
    </location>
</feature>
<feature type="helix" evidence="18">
    <location>
        <begin position="387"/>
        <end position="406"/>
    </location>
</feature>
<feature type="helix" evidence="17">
    <location>
        <begin position="410"/>
        <end position="429"/>
    </location>
</feature>
<feature type="helix" evidence="17">
    <location>
        <begin position="444"/>
        <end position="492"/>
    </location>
</feature>
<feature type="helix" evidence="17">
    <location>
        <begin position="496"/>
        <end position="503"/>
    </location>
</feature>
<feature type="helix" evidence="17">
    <location>
        <begin position="505"/>
        <end position="523"/>
    </location>
</feature>
<feature type="helix" evidence="18">
    <location>
        <begin position="533"/>
        <end position="543"/>
    </location>
</feature>
<feature type="helix" evidence="20">
    <location>
        <begin position="548"/>
        <end position="550"/>
    </location>
</feature>
<feature type="strand" evidence="18">
    <location>
        <begin position="551"/>
        <end position="553"/>
    </location>
</feature>
<feature type="helix" evidence="18">
    <location>
        <begin position="555"/>
        <end position="560"/>
    </location>
</feature>
<feature type="helix" evidence="18">
    <location>
        <begin position="562"/>
        <end position="566"/>
    </location>
</feature>
<feature type="turn" evidence="18">
    <location>
        <begin position="567"/>
        <end position="569"/>
    </location>
</feature>
<feature type="helix" evidence="18">
    <location>
        <begin position="574"/>
        <end position="588"/>
    </location>
</feature>
<feature type="strand" evidence="18">
    <location>
        <begin position="598"/>
        <end position="604"/>
    </location>
</feature>
<feature type="strand" evidence="20">
    <location>
        <begin position="607"/>
        <end position="610"/>
    </location>
</feature>
<feature type="helix" evidence="18">
    <location>
        <begin position="611"/>
        <end position="622"/>
    </location>
</feature>
<feature type="strand" evidence="18">
    <location>
        <begin position="629"/>
        <end position="633"/>
    </location>
</feature>
<feature type="helix" evidence="18">
    <location>
        <begin position="634"/>
        <end position="636"/>
    </location>
</feature>
<feature type="helix" evidence="18">
    <location>
        <begin position="640"/>
        <end position="645"/>
    </location>
</feature>
<feature type="strand" evidence="19">
    <location>
        <begin position="651"/>
        <end position="653"/>
    </location>
</feature>
<feature type="helix" evidence="19">
    <location>
        <begin position="656"/>
        <end position="658"/>
    </location>
</feature>
<feature type="helix" evidence="18">
    <location>
        <begin position="661"/>
        <end position="668"/>
    </location>
</feature>
<feature type="strand" evidence="18">
    <location>
        <begin position="673"/>
        <end position="677"/>
    </location>
</feature>
<feature type="helix" evidence="18">
    <location>
        <begin position="679"/>
        <end position="681"/>
    </location>
</feature>
<feature type="turn" evidence="19">
    <location>
        <begin position="684"/>
        <end position="686"/>
    </location>
</feature>
<feature type="turn" evidence="18">
    <location>
        <begin position="687"/>
        <end position="690"/>
    </location>
</feature>
<feature type="helix" evidence="18">
    <location>
        <begin position="691"/>
        <end position="695"/>
    </location>
</feature>
<feature type="strand" evidence="18">
    <location>
        <begin position="696"/>
        <end position="700"/>
    </location>
</feature>
<feature type="strand" evidence="20">
    <location>
        <begin position="702"/>
        <end position="705"/>
    </location>
</feature>
<feature type="strand" evidence="18">
    <location>
        <begin position="706"/>
        <end position="708"/>
    </location>
</feature>
<feature type="strand" evidence="18">
    <location>
        <begin position="713"/>
        <end position="718"/>
    </location>
</feature>
<feature type="helix" evidence="18">
    <location>
        <begin position="722"/>
        <end position="728"/>
    </location>
</feature>
<feature type="turn" evidence="18">
    <location>
        <begin position="729"/>
        <end position="731"/>
    </location>
</feature>
<feature type="helix" evidence="18">
    <location>
        <begin position="734"/>
        <end position="737"/>
    </location>
</feature>
<feature type="turn" evidence="19">
    <location>
        <begin position="742"/>
        <end position="748"/>
    </location>
</feature>
<feature type="strand" evidence="18">
    <location>
        <begin position="751"/>
        <end position="762"/>
    </location>
</feature>
<feature type="helix" evidence="18">
    <location>
        <begin position="768"/>
        <end position="787"/>
    </location>
</feature>
<feature type="turn" evidence="18">
    <location>
        <begin position="788"/>
        <end position="790"/>
    </location>
</feature>
<feature type="strand" evidence="18">
    <location>
        <begin position="792"/>
        <end position="795"/>
    </location>
</feature>
<feature type="helix" evidence="18">
    <location>
        <begin position="797"/>
        <end position="806"/>
    </location>
</feature>
<feature type="turn" evidence="18">
    <location>
        <begin position="811"/>
        <end position="814"/>
    </location>
</feature>
<feature type="helix" evidence="18">
    <location>
        <begin position="815"/>
        <end position="824"/>
    </location>
</feature>
<feature type="helix" evidence="18">
    <location>
        <begin position="826"/>
        <end position="834"/>
    </location>
</feature>
<feature type="strand" evidence="20">
    <location>
        <begin position="836"/>
        <end position="838"/>
    </location>
</feature>
<feature type="strand" evidence="18">
    <location>
        <begin position="842"/>
        <end position="856"/>
    </location>
</feature>
<proteinExistence type="evidence at protein level"/>
<keyword id="KW-0002">3D-structure</keyword>
<keyword id="KW-0007">Acetylation</keyword>
<keyword id="KW-0024">Alternative initiation</keyword>
<keyword id="KW-0067">ATP-binding</keyword>
<keyword id="KW-0143">Chaperone</keyword>
<keyword id="KW-0175">Coiled coil</keyword>
<keyword id="KW-0963">Cytoplasm</keyword>
<keyword id="KW-0903">Direct protein sequencing</keyword>
<keyword id="KW-0547">Nucleotide-binding</keyword>
<keyword id="KW-1185">Reference proteome</keyword>
<keyword id="KW-0677">Repeat</keyword>
<keyword id="KW-0346">Stress response</keyword>
<dbReference type="EMBL" id="M29364">
    <property type="protein sequence ID" value="AAA24422.1"/>
    <property type="molecule type" value="Genomic_DNA"/>
</dbReference>
<dbReference type="EMBL" id="U00096">
    <property type="protein sequence ID" value="AAC75641.1"/>
    <property type="molecule type" value="Genomic_DNA"/>
</dbReference>
<dbReference type="EMBL" id="U00096">
    <property type="protein sequence ID" value="QNV50514.1"/>
    <property type="molecule type" value="Genomic_DNA"/>
</dbReference>
<dbReference type="EMBL" id="AP009048">
    <property type="protein sequence ID" value="BAA16476.1"/>
    <property type="molecule type" value="Genomic_DNA"/>
</dbReference>
<dbReference type="EMBL" id="X57620">
    <property type="protein sequence ID" value="CAA40846.1"/>
    <property type="molecule type" value="Genomic_DNA"/>
</dbReference>
<dbReference type="EMBL" id="V00350">
    <property type="protein sequence ID" value="CAA23639.1"/>
    <property type="molecule type" value="Genomic_DNA"/>
</dbReference>
<dbReference type="EMBL" id="U50134">
    <property type="protein sequence ID" value="AAA92959.1"/>
    <property type="molecule type" value="Genomic_DNA"/>
</dbReference>
<dbReference type="PIR" id="C65037">
    <property type="entry name" value="D35905"/>
</dbReference>
<dbReference type="RefSeq" id="NP_417083.1">
    <property type="nucleotide sequence ID" value="NC_000913.3"/>
</dbReference>
<dbReference type="RefSeq" id="WP_001235102.1">
    <property type="nucleotide sequence ID" value="NZ_STEB01000040.1"/>
</dbReference>
<dbReference type="PDB" id="1JBK">
    <property type="method" value="X-ray"/>
    <property type="resolution" value="1.80 A"/>
    <property type="chains" value="A=159-351"/>
</dbReference>
<dbReference type="PDB" id="1KHY">
    <property type="method" value="X-ray"/>
    <property type="resolution" value="1.95 A"/>
    <property type="chains" value="A/B/C/D=1-148"/>
</dbReference>
<dbReference type="PDB" id="4CIU">
    <property type="method" value="X-ray"/>
    <property type="resolution" value="3.50 A"/>
    <property type="chains" value="A=143-857"/>
</dbReference>
<dbReference type="PDB" id="4D2Q">
    <property type="method" value="EM"/>
    <property type="resolution" value="18.00 A"/>
    <property type="chains" value="A/B/C/D/E/F=1-857"/>
</dbReference>
<dbReference type="PDB" id="4D2U">
    <property type="method" value="EM"/>
    <property type="resolution" value="17.00 A"/>
    <property type="chains" value="A/B/C/D/E/F=1-857"/>
</dbReference>
<dbReference type="PDB" id="4D2X">
    <property type="method" value="EM"/>
    <property type="resolution" value="20.00 A"/>
    <property type="chains" value="A/B/C/D/E/F=1-857"/>
</dbReference>
<dbReference type="PDB" id="5OFO">
    <property type="method" value="EM"/>
    <property type="resolution" value="4.60 A"/>
    <property type="chains" value="A/B/C/D/E/F=1-721, A/B/C/D/E/F=750-857"/>
</dbReference>
<dbReference type="PDB" id="5OG1">
    <property type="method" value="EM"/>
    <property type="resolution" value="4.50 A"/>
    <property type="chains" value="A/B/C/D/E/F=1-721, A/B/C/D/E/F=750-857"/>
</dbReference>
<dbReference type="PDB" id="6OAX">
    <property type="method" value="EM"/>
    <property type="resolution" value="2.90 A"/>
    <property type="chains" value="A/B/C/D/E/F=1-857"/>
</dbReference>
<dbReference type="PDB" id="6OAY">
    <property type="method" value="EM"/>
    <property type="resolution" value="3.30 A"/>
    <property type="chains" value="A/B/C/D/E/F=1-857"/>
</dbReference>
<dbReference type="PDB" id="6OG1">
    <property type="method" value="EM"/>
    <property type="resolution" value="3.30 A"/>
    <property type="chains" value="A/F=1-857"/>
</dbReference>
<dbReference type="PDB" id="6OG2">
    <property type="method" value="EM"/>
    <property type="resolution" value="4.10 A"/>
    <property type="chains" value="A/F=1-857"/>
</dbReference>
<dbReference type="PDB" id="6OG3">
    <property type="method" value="EM"/>
    <property type="resolution" value="4.10 A"/>
    <property type="chains" value="A/C/E=1-857"/>
</dbReference>
<dbReference type="PDB" id="6QS6">
    <property type="method" value="EM"/>
    <property type="resolution" value="3.90 A"/>
    <property type="chains" value="A/B/C/D/E/F=1-857"/>
</dbReference>
<dbReference type="PDB" id="6QS7">
    <property type="method" value="EM"/>
    <property type="resolution" value="3.80 A"/>
    <property type="chains" value="A/B/C/D/E/F=1-857"/>
</dbReference>
<dbReference type="PDB" id="6QS8">
    <property type="method" value="EM"/>
    <property type="resolution" value="3.90 A"/>
    <property type="chains" value="A/B/C/D/E/F=1-857"/>
</dbReference>
<dbReference type="PDBsum" id="1JBK"/>
<dbReference type="PDBsum" id="1KHY"/>
<dbReference type="PDBsum" id="4CIU"/>
<dbReference type="PDBsum" id="4D2Q"/>
<dbReference type="PDBsum" id="4D2U"/>
<dbReference type="PDBsum" id="4D2X"/>
<dbReference type="PDBsum" id="5OFO"/>
<dbReference type="PDBsum" id="5OG1"/>
<dbReference type="PDBsum" id="6OAX"/>
<dbReference type="PDBsum" id="6OAY"/>
<dbReference type="PDBsum" id="6OG1"/>
<dbReference type="PDBsum" id="6OG2"/>
<dbReference type="PDBsum" id="6OG3"/>
<dbReference type="PDBsum" id="6QS6"/>
<dbReference type="PDBsum" id="6QS7"/>
<dbReference type="PDBsum" id="6QS8"/>
<dbReference type="EMDB" id="EMD-20051"/>
<dbReference type="EMDB" id="EMD-2555"/>
<dbReference type="EMDB" id="EMD-2557"/>
<dbReference type="EMDB" id="EMD-2559"/>
<dbReference type="EMDB" id="EMD-4624"/>
<dbReference type="EMDB" id="EMD-4626"/>
<dbReference type="EMDB" id="EMD-4627"/>
<dbReference type="SMR" id="P63284"/>
<dbReference type="BioGRID" id="4260618">
    <property type="interactions" value="259"/>
</dbReference>
<dbReference type="BioGRID" id="851414">
    <property type="interactions" value="5"/>
</dbReference>
<dbReference type="DIP" id="DIP-35844N"/>
<dbReference type="FunCoup" id="P63284">
    <property type="interactions" value="880"/>
</dbReference>
<dbReference type="IntAct" id="P63284">
    <property type="interactions" value="81"/>
</dbReference>
<dbReference type="MINT" id="P63284"/>
<dbReference type="STRING" id="511145.b2592"/>
<dbReference type="MEROPS" id="X20.002"/>
<dbReference type="CarbonylDB" id="P63284"/>
<dbReference type="iPTMnet" id="P63284"/>
<dbReference type="jPOST" id="P63284"/>
<dbReference type="PaxDb" id="511145-b2592"/>
<dbReference type="EnsemblBacteria" id="AAC75641">
    <property type="protein sequence ID" value="AAC75641"/>
    <property type="gene ID" value="b2592"/>
</dbReference>
<dbReference type="GeneID" id="93774494"/>
<dbReference type="GeneID" id="947077"/>
<dbReference type="KEGG" id="ecj:JW2573"/>
<dbReference type="KEGG" id="eco:b2592"/>
<dbReference type="KEGG" id="ecoc:C3026_14365"/>
<dbReference type="PATRIC" id="fig|1411691.4.peg.4145"/>
<dbReference type="EchoBASE" id="EB0155"/>
<dbReference type="eggNOG" id="COG0542">
    <property type="taxonomic scope" value="Bacteria"/>
</dbReference>
<dbReference type="HOGENOM" id="CLU_005070_4_0_6"/>
<dbReference type="InParanoid" id="P63284"/>
<dbReference type="OMA" id="VSKMMQG"/>
<dbReference type="OrthoDB" id="9803641at2"/>
<dbReference type="PhylomeDB" id="P63284"/>
<dbReference type="BioCyc" id="EcoCyc:EG10157-MONOMER"/>
<dbReference type="BioCyc" id="MetaCyc:EG10157-MONOMER"/>
<dbReference type="BRENDA" id="3.6.4.10">
    <property type="organism ID" value="2026"/>
</dbReference>
<dbReference type="SABIO-RK" id="P63284"/>
<dbReference type="CD-CODE" id="3A3AD14F">
    <property type="entry name" value="Aggresome"/>
</dbReference>
<dbReference type="EvolutionaryTrace" id="P63284"/>
<dbReference type="PRO" id="PR:P63284"/>
<dbReference type="Proteomes" id="UP000000625">
    <property type="component" value="Chromosome"/>
</dbReference>
<dbReference type="GO" id="GO:0005737">
    <property type="term" value="C:cytoplasm"/>
    <property type="evidence" value="ECO:0000318"/>
    <property type="project" value="GO_Central"/>
</dbReference>
<dbReference type="GO" id="GO:0005829">
    <property type="term" value="C:cytosol"/>
    <property type="evidence" value="ECO:0000314"/>
    <property type="project" value="EcoCyc"/>
</dbReference>
<dbReference type="GO" id="GO:0016020">
    <property type="term" value="C:membrane"/>
    <property type="evidence" value="ECO:0007005"/>
    <property type="project" value="UniProtKB"/>
</dbReference>
<dbReference type="GO" id="GO:0005524">
    <property type="term" value="F:ATP binding"/>
    <property type="evidence" value="ECO:0007669"/>
    <property type="project" value="UniProtKB-KW"/>
</dbReference>
<dbReference type="GO" id="GO:0016887">
    <property type="term" value="F:ATP hydrolysis activity"/>
    <property type="evidence" value="ECO:0000314"/>
    <property type="project" value="EcoCyc"/>
</dbReference>
<dbReference type="GO" id="GO:0042802">
    <property type="term" value="F:identical protein binding"/>
    <property type="evidence" value="ECO:0000314"/>
    <property type="project" value="EcoCyc"/>
</dbReference>
<dbReference type="GO" id="GO:0034605">
    <property type="term" value="P:cellular response to heat"/>
    <property type="evidence" value="ECO:0000318"/>
    <property type="project" value="GO_Central"/>
</dbReference>
<dbReference type="GO" id="GO:0042026">
    <property type="term" value="P:protein refolding"/>
    <property type="evidence" value="ECO:0007669"/>
    <property type="project" value="InterPro"/>
</dbReference>
<dbReference type="GO" id="GO:0009408">
    <property type="term" value="P:response to heat"/>
    <property type="evidence" value="ECO:0000315"/>
    <property type="project" value="EcoCyc"/>
</dbReference>
<dbReference type="CDD" id="cd00009">
    <property type="entry name" value="AAA"/>
    <property type="match status" value="1"/>
</dbReference>
<dbReference type="CDD" id="cd19499">
    <property type="entry name" value="RecA-like_ClpB_Hsp104-like"/>
    <property type="match status" value="1"/>
</dbReference>
<dbReference type="FunFam" id="1.10.1780.10:FF:000003">
    <property type="entry name" value="ATP-dependent chaperone ClpB"/>
    <property type="match status" value="1"/>
</dbReference>
<dbReference type="FunFam" id="1.10.8.60:FF:000017">
    <property type="entry name" value="ATP-dependent chaperone ClpB"/>
    <property type="match status" value="1"/>
</dbReference>
<dbReference type="FunFam" id="3.40.50.300:FF:000120">
    <property type="entry name" value="ATP-dependent chaperone ClpB"/>
    <property type="match status" value="1"/>
</dbReference>
<dbReference type="FunFam" id="3.40.50.300:FF:000025">
    <property type="entry name" value="ATP-dependent Clp protease subunit"/>
    <property type="match status" value="1"/>
</dbReference>
<dbReference type="FunFam" id="3.40.50.300:FF:000010">
    <property type="entry name" value="Chaperone clpB 1, putative"/>
    <property type="match status" value="1"/>
</dbReference>
<dbReference type="Gene3D" id="1.10.8.60">
    <property type="match status" value="1"/>
</dbReference>
<dbReference type="Gene3D" id="1.10.1780.10">
    <property type="entry name" value="Clp, N-terminal domain"/>
    <property type="match status" value="1"/>
</dbReference>
<dbReference type="Gene3D" id="3.40.50.300">
    <property type="entry name" value="P-loop containing nucleotide triphosphate hydrolases"/>
    <property type="match status" value="3"/>
</dbReference>
<dbReference type="InterPro" id="IPR003593">
    <property type="entry name" value="AAA+_ATPase"/>
</dbReference>
<dbReference type="InterPro" id="IPR003959">
    <property type="entry name" value="ATPase_AAA_core"/>
</dbReference>
<dbReference type="InterPro" id="IPR017730">
    <property type="entry name" value="Chaperonin_ClpB"/>
</dbReference>
<dbReference type="InterPro" id="IPR019489">
    <property type="entry name" value="Clp_ATPase_C"/>
</dbReference>
<dbReference type="InterPro" id="IPR036628">
    <property type="entry name" value="Clp_N_dom_sf"/>
</dbReference>
<dbReference type="InterPro" id="IPR004176">
    <property type="entry name" value="Clp_R_dom"/>
</dbReference>
<dbReference type="InterPro" id="IPR001270">
    <property type="entry name" value="ClpA/B"/>
</dbReference>
<dbReference type="InterPro" id="IPR018368">
    <property type="entry name" value="ClpA/B_CS1"/>
</dbReference>
<dbReference type="InterPro" id="IPR028299">
    <property type="entry name" value="ClpA/B_CS2"/>
</dbReference>
<dbReference type="InterPro" id="IPR041546">
    <property type="entry name" value="ClpA/ClpB_AAA_lid"/>
</dbReference>
<dbReference type="InterPro" id="IPR050130">
    <property type="entry name" value="ClpA_ClpB"/>
</dbReference>
<dbReference type="InterPro" id="IPR027417">
    <property type="entry name" value="P-loop_NTPase"/>
</dbReference>
<dbReference type="NCBIfam" id="TIGR03346">
    <property type="entry name" value="chaperone_ClpB"/>
    <property type="match status" value="1"/>
</dbReference>
<dbReference type="NCBIfam" id="NF008118">
    <property type="entry name" value="PRK10865.1"/>
    <property type="match status" value="1"/>
</dbReference>
<dbReference type="PANTHER" id="PTHR11638">
    <property type="entry name" value="ATP-DEPENDENT CLP PROTEASE"/>
    <property type="match status" value="1"/>
</dbReference>
<dbReference type="PANTHER" id="PTHR11638:SF18">
    <property type="entry name" value="HEAT SHOCK PROTEIN 104"/>
    <property type="match status" value="1"/>
</dbReference>
<dbReference type="Pfam" id="PF00004">
    <property type="entry name" value="AAA"/>
    <property type="match status" value="1"/>
</dbReference>
<dbReference type="Pfam" id="PF07724">
    <property type="entry name" value="AAA_2"/>
    <property type="match status" value="1"/>
</dbReference>
<dbReference type="Pfam" id="PF17871">
    <property type="entry name" value="AAA_lid_9"/>
    <property type="match status" value="1"/>
</dbReference>
<dbReference type="Pfam" id="PF02861">
    <property type="entry name" value="Clp_N"/>
    <property type="match status" value="2"/>
</dbReference>
<dbReference type="Pfam" id="PF10431">
    <property type="entry name" value="ClpB_D2-small"/>
    <property type="match status" value="1"/>
</dbReference>
<dbReference type="PRINTS" id="PR00300">
    <property type="entry name" value="CLPPROTEASEA"/>
</dbReference>
<dbReference type="SMART" id="SM00382">
    <property type="entry name" value="AAA"/>
    <property type="match status" value="2"/>
</dbReference>
<dbReference type="SMART" id="SM01086">
    <property type="entry name" value="ClpB_D2-small"/>
    <property type="match status" value="1"/>
</dbReference>
<dbReference type="SUPFAM" id="SSF81923">
    <property type="entry name" value="Double Clp-N motif"/>
    <property type="match status" value="1"/>
</dbReference>
<dbReference type="SUPFAM" id="SSF52540">
    <property type="entry name" value="P-loop containing nucleoside triphosphate hydrolases"/>
    <property type="match status" value="2"/>
</dbReference>
<dbReference type="PROSITE" id="PS51903">
    <property type="entry name" value="CLP_R"/>
    <property type="match status" value="1"/>
</dbReference>
<dbReference type="PROSITE" id="PS00870">
    <property type="entry name" value="CLPAB_1"/>
    <property type="match status" value="1"/>
</dbReference>
<dbReference type="PROSITE" id="PS00871">
    <property type="entry name" value="CLPAB_2"/>
    <property type="match status" value="1"/>
</dbReference>
<sequence>MRLDRLTNKFQLALADAQSLALGHDNQFIEPLHLMSALLNQEGGSVSPLLTSAGINAGQLRTDINQALNRLPQVEGTGGDVQPSQDLVRVLNLCDKLAQKRGDNFISSELFVLAALESRGTLADILKAAGATTANITQAIEQMRGGESVNDQGAEDQRQALKKYTIDLTERAEQGKLDPVIGRDEEIRRTIQVLQRRTKNNPVLIGEPGVGKTAIVEGLAQRIINGEVPEGLKGRRVLALDMGALVAGAKYRGEFEERLKGVLNDLAKQEGNVILFIDELHTMVGAGKADGAMDAGNMLKPALARGELHCVGATTLDEYRQYIEKDAALERRFQKVFVAEPSVEDTIAILRGLKERYELHHHVQITDPAIVAAATLSHRYIADRQLPDKAIDLIDEAASSIRMQIDSKPEELDRLDRRIIQLKLEQQALMKESDEASKKRLDMLNEELSDKERQYSELEEEWKAEKASLSGTQTIKAELEQAKIAIEQARRVGDLARMSELQYGKIPELEKQLEAATQLEGKTMRLLRNKVTDAEIAEVLARWTGIPVSRMMESEREKLLRMEQELHHRVIGQNEAVDAVSNAIRRSRAGLADPNRPIGSFLFLGPTGVGKTELCKALANFMFDSDEAMVRIDMSEFMEKHSVSRLVGAPPGYVGYEEGGYLTEAVRRRPYSVILLDEVEKAHPDVFNILLQVLDDGRLTDGQGRTVDFRNTVVIMTSNLGSDLIQERFGELDYAHMKELVLGVVSHNFRPEFINRIDEVVVFHPLGEQHIASIAQIQLKRLYKRLEERGYEIHISDEALKLLSENGYDPVYGARPLKRAIQQQIENPLAQQILSGELVPGKVIRLEVNEDRIVAVQ</sequence>
<gene>
    <name type="primary">clpB</name>
    <name type="synonym">htpM</name>
    <name evidence="14" type="ordered locus">b2592</name>
    <name type="ordered locus">JW2573</name>
</gene>